<name>ZN263_MOUSE</name>
<comment type="function">
    <text evidence="1">Transcription factor that binds to the consensus sequence 5'-TCCTCCC-3' and acts as a transcriptional repressor (By similarity). Binds to the promoter region of SIX3 and recruits other proteins involved in chromatin modification and transcriptional corepression, resulting in methylation of the promoter and transcriptional repression (By similarity). Acts as a transcriptional repressor of HS3ST1 and HS3ST3A1 via binding to gene promoter regions (By similarity).</text>
</comment>
<comment type="subunit">
    <text evidence="1">Interacts with a number of proteins involved in chromatin modification and transcriptional corepression including DNMT1, DNMT3A, HDAC2, PHF8, TRIM28/KAP1, SETDB1, EZH2, UHRF1, CBX3/HP1-gamma, and CBX5/HP1-alpha; recruits these proteins to the SIX3 promoter region, leading to SIX3 transcriptional repression (By similarity). Interacts with MAPK3/ERK1 and MAPK1/ERK2 (By similarity).</text>
</comment>
<comment type="subcellular location">
    <subcellularLocation>
        <location evidence="5">Nucleus</location>
    </subcellularLocation>
</comment>
<comment type="tissue specificity">
    <text evidence="5">Expressed in Purkinje cells in the brain (at protein level).</text>
</comment>
<comment type="PTM">
    <text evidence="1">Ubiquitinated, leading to proteasomal degradation.</text>
</comment>
<comment type="similarity">
    <text evidence="6">Belongs to the krueppel C2H2-type zinc-finger protein family.</text>
</comment>
<comment type="caution">
    <text evidence="7 8">An isoform of Znf263 lacking residues 1-288 was described, however this paper was retracted due to concerns about the validity of figures published in the paper.</text>
</comment>
<evidence type="ECO:0000250" key="1">
    <source>
        <dbReference type="UniProtKB" id="O14978"/>
    </source>
</evidence>
<evidence type="ECO:0000255" key="2">
    <source>
        <dbReference type="PROSITE-ProRule" id="PRU00042"/>
    </source>
</evidence>
<evidence type="ECO:0000255" key="3">
    <source>
        <dbReference type="PROSITE-ProRule" id="PRU00187"/>
    </source>
</evidence>
<evidence type="ECO:0000256" key="4">
    <source>
        <dbReference type="SAM" id="MobiDB-lite"/>
    </source>
</evidence>
<evidence type="ECO:0000269" key="5">
    <source>
    </source>
</evidence>
<evidence type="ECO:0000305" key="6"/>
<evidence type="ECO:0000305" key="7">
    <source>
    </source>
</evidence>
<evidence type="ECO:0000305" key="8">
    <source>
    </source>
</evidence>
<evidence type="ECO:0000312" key="9">
    <source>
        <dbReference type="EMBL" id="AAH56222.1"/>
    </source>
</evidence>
<evidence type="ECO:0000312" key="10">
    <source>
        <dbReference type="EMBL" id="BAC25096.1"/>
    </source>
</evidence>
<evidence type="ECO:0000312" key="11">
    <source>
        <dbReference type="MGI" id="MGI:1921370"/>
    </source>
</evidence>
<evidence type="ECO:0000312" key="12">
    <source>
        <dbReference type="Proteomes" id="UP000000589"/>
    </source>
</evidence>
<feature type="chain" id="PRO_0000452087" description="Zinc finger protein 263">
    <location>
        <begin position="1"/>
        <end position="680"/>
    </location>
</feature>
<feature type="domain" description="SCAN box" evidence="3">
    <location>
        <begin position="43"/>
        <end position="125"/>
    </location>
</feature>
<feature type="zinc finger region" description="C2H2-type 1" evidence="2">
    <location>
        <begin position="378"/>
        <end position="400"/>
    </location>
</feature>
<feature type="zinc finger region" description="C2H2-type 2" evidence="2">
    <location>
        <begin position="434"/>
        <end position="456"/>
    </location>
</feature>
<feature type="zinc finger region" description="C2H2-type 3" evidence="2">
    <location>
        <begin position="462"/>
        <end position="484"/>
    </location>
</feature>
<feature type="zinc finger region" description="C2H2-type 4" evidence="2">
    <location>
        <begin position="490"/>
        <end position="512"/>
    </location>
</feature>
<feature type="zinc finger region" description="C2H2-type 5" evidence="2">
    <location>
        <begin position="518"/>
        <end position="540"/>
    </location>
</feature>
<feature type="zinc finger region" description="C2H2-type 6" evidence="2">
    <location>
        <begin position="572"/>
        <end position="594"/>
    </location>
</feature>
<feature type="zinc finger region" description="C2H2-type 7" evidence="2">
    <location>
        <begin position="600"/>
        <end position="622"/>
    </location>
</feature>
<feature type="zinc finger region" description="C2H2-type 8" evidence="2">
    <location>
        <begin position="628"/>
        <end position="650"/>
    </location>
</feature>
<feature type="zinc finger region" description="C2H2-type 9" evidence="2">
    <location>
        <begin position="656"/>
        <end position="678"/>
    </location>
</feature>
<feature type="region of interest" description="Disordered" evidence="4">
    <location>
        <begin position="147"/>
        <end position="191"/>
    </location>
</feature>
<feature type="modified residue" description="Phosphoserine" evidence="1">
    <location>
        <position position="168"/>
    </location>
</feature>
<feature type="modified residue" description="Phosphoserine" evidence="1">
    <location>
        <position position="180"/>
    </location>
</feature>
<feature type="cross-link" description="Glycyl lysine isopeptide (Lys-Gly) (interchain with G-Cter in SUMO2)" evidence="1">
    <location>
        <position position="19"/>
    </location>
</feature>
<feature type="cross-link" description="Glycyl lysine isopeptide (Lys-Gly) (interchain with G-Cter in SUMO2)" evidence="1">
    <location>
        <position position="159"/>
    </location>
</feature>
<feature type="cross-link" description="Glycyl lysine isopeptide (Lys-Gly) (interchain with G-Cter in SUMO2)" evidence="1">
    <location>
        <position position="286"/>
    </location>
</feature>
<feature type="cross-link" description="Glycyl lysine isopeptide (Lys-Gly) (interchain with G-Cter in SUMO2)" evidence="1">
    <location>
        <position position="300"/>
    </location>
</feature>
<feature type="cross-link" description="Glycyl lysine isopeptide (Lys-Gly) (interchain with G-Cter in SUMO2)" evidence="1">
    <location>
        <position position="376"/>
    </location>
</feature>
<feature type="cross-link" description="Glycyl lysine isopeptide (Lys-Gly) (interchain with G-Cter in SUMO2)" evidence="1">
    <location>
        <position position="570"/>
    </location>
</feature>
<feature type="cross-link" description="Glycyl lysine isopeptide (Lys-Gly) (interchain with G-Cter in SUMO2)" evidence="1">
    <location>
        <position position="579"/>
    </location>
</feature>
<feature type="sequence conflict" description="In Ref. 3; AAH56222." evidence="6" ref="3">
    <original>F</original>
    <variation>S</variation>
    <location>
        <position position="462"/>
    </location>
</feature>
<proteinExistence type="evidence at protein level"/>
<organism evidence="12">
    <name type="scientific">Mus musculus</name>
    <name type="common">Mouse</name>
    <dbReference type="NCBI Taxonomy" id="10090"/>
    <lineage>
        <taxon>Eukaryota</taxon>
        <taxon>Metazoa</taxon>
        <taxon>Chordata</taxon>
        <taxon>Craniata</taxon>
        <taxon>Vertebrata</taxon>
        <taxon>Euteleostomi</taxon>
        <taxon>Mammalia</taxon>
        <taxon>Eutheria</taxon>
        <taxon>Euarchontoglires</taxon>
        <taxon>Glires</taxon>
        <taxon>Rodentia</taxon>
        <taxon>Myomorpha</taxon>
        <taxon>Muroidea</taxon>
        <taxon>Muridae</taxon>
        <taxon>Murinae</taxon>
        <taxon>Mus</taxon>
        <taxon>Mus</taxon>
    </lineage>
</organism>
<sequence length="680" mass="77527">MTMAAGPSSQEPEGLLIVKLEEDCAWSHEVPPPEPEPSPEASHLRFRRFRFQDAPGPREALSRLQELCRGWLRPEMRTKEQILELLVLEQFLTILPQEIQSRVQELRPESGEEAVTLVERMQKELGKLRQQVTNQGRGAEVLLEEPLPLETAGESPSFKLEPMETERSPGPRLQELLDPSPQRDSQAVKERALSAPWLSLFPPEGNVEDKDMTGTQLPESLEDMAMYISQEWDHQDPSKRALSRYMVQDSYENSGTLESSIPSQEVSSTHVEQGEKLWDSSVQTCKEGMNPRNPVPGVEKFENQERNVESVSPESTHPPVLLPGQARREVPWSPEQGRLDDREGHWECPPEDKIEESLVGTPSCKGLVQAKEQPKKLHLCALCGKNFSNNSNLIRHQRIHAAEKLCMDVECGEVFGGHPHFLSLHRTHIGEEAHKCLECGKCFSQNTHLTRHQRTHTGEKPFQCNACGKSFSCNSNLNRHQRTHTGEKPYKCPECGEIFAHSSNLLRHQRIHTGERPYRCSECGKSFSRSSHLVIHERTHEKERLDPFPECGQGMNDSAPFLTNHRVEKKLFECSTCGKSFRQGMHLTRHQRTHTGEKPYKCILCGENFSHRSNLIRHQRIHTGEKPYTCHECGDSFSHSSNRIRHLRTHTGERPYKCSECGESFSRSSRLTSHQRTHTG</sequence>
<keyword id="KW-0238">DNA-binding</keyword>
<keyword id="KW-1017">Isopeptide bond</keyword>
<keyword id="KW-0479">Metal-binding</keyword>
<keyword id="KW-0539">Nucleus</keyword>
<keyword id="KW-0597">Phosphoprotein</keyword>
<keyword id="KW-1185">Reference proteome</keyword>
<keyword id="KW-0677">Repeat</keyword>
<keyword id="KW-0804">Transcription</keyword>
<keyword id="KW-0805">Transcription regulation</keyword>
<keyword id="KW-0832">Ubl conjugation</keyword>
<keyword id="KW-0862">Zinc</keyword>
<keyword id="KW-0863">Zinc-finger</keyword>
<gene>
    <name evidence="11" type="primary">Znf263</name>
    <name evidence="1" type="synonym">FPM315</name>
    <name evidence="6" type="synonym">Zfp263</name>
    <name evidence="1" type="synonym">ZKSCAN12</name>
</gene>
<reference key="1">
    <citation type="journal article" date="2002" name="Mol. Cell. Biol.">
        <title>A Kruppel-associated box-zinc finger protein, NT2, represses cell-type-specific promoter activity of the alpha 2(XI) collagen gene.</title>
        <authorList>
            <person name="Tanaka K."/>
            <person name="Tsumaki N."/>
            <person name="Kozak C.A."/>
            <person name="Matsumoto Y."/>
            <person name="Nakatani F."/>
            <person name="Iwamoto Y."/>
            <person name="Yamada Y."/>
        </authorList>
    </citation>
    <scope>RETRACTED PAPER</scope>
</reference>
<reference key="2">
    <citation type="journal article" date="2009" name="Mol. Cell. Biol.">
        <title>Retraction.</title>
        <authorList>
            <person name="Tanaka K."/>
            <person name="Matsumoto Y."/>
            <person name="Nakatani F."/>
            <person name="Iwamoto Y."/>
            <person name="Yamada Y."/>
        </authorList>
    </citation>
    <scope>RETRACTION NOTICE OF PUBMED:12024037</scope>
</reference>
<reference evidence="9" key="3">
    <citation type="journal article" date="2004" name="Genome Res.">
        <title>The status, quality, and expansion of the NIH full-length cDNA project: the Mammalian Gene Collection (MGC).</title>
        <authorList>
            <consortium name="The MGC Project Team"/>
        </authorList>
    </citation>
    <scope>NUCLEOTIDE SEQUENCE [LARGE SCALE MRNA]</scope>
    <source>
        <strain evidence="9">129/Sv X 129SvCp</strain>
        <tissue evidence="9">Embryonic stem cell</tissue>
    </source>
</reference>
<reference key="4">
    <citation type="journal article" date="2005" name="Science">
        <title>The transcriptional landscape of the mammalian genome.</title>
        <authorList>
            <person name="Carninci P."/>
            <person name="Kasukawa T."/>
            <person name="Katayama S."/>
            <person name="Gough J."/>
            <person name="Frith M.C."/>
            <person name="Maeda N."/>
            <person name="Oyama R."/>
            <person name="Ravasi T."/>
            <person name="Lenhard B."/>
            <person name="Wells C."/>
            <person name="Kodzius R."/>
            <person name="Shimokawa K."/>
            <person name="Bajic V.B."/>
            <person name="Brenner S.E."/>
            <person name="Batalov S."/>
            <person name="Forrest A.R."/>
            <person name="Zavolan M."/>
            <person name="Davis M.J."/>
            <person name="Wilming L.G."/>
            <person name="Aidinis V."/>
            <person name="Allen J.E."/>
            <person name="Ambesi-Impiombato A."/>
            <person name="Apweiler R."/>
            <person name="Aturaliya R.N."/>
            <person name="Bailey T.L."/>
            <person name="Bansal M."/>
            <person name="Baxter L."/>
            <person name="Beisel K.W."/>
            <person name="Bersano T."/>
            <person name="Bono H."/>
            <person name="Chalk A.M."/>
            <person name="Chiu K.P."/>
            <person name="Choudhary V."/>
            <person name="Christoffels A."/>
            <person name="Clutterbuck D.R."/>
            <person name="Crowe M.L."/>
            <person name="Dalla E."/>
            <person name="Dalrymple B.P."/>
            <person name="de Bono B."/>
            <person name="Della Gatta G."/>
            <person name="di Bernardo D."/>
            <person name="Down T."/>
            <person name="Engstrom P."/>
            <person name="Fagiolini M."/>
            <person name="Faulkner G."/>
            <person name="Fletcher C.F."/>
            <person name="Fukushima T."/>
            <person name="Furuno M."/>
            <person name="Futaki S."/>
            <person name="Gariboldi M."/>
            <person name="Georgii-Hemming P."/>
            <person name="Gingeras T.R."/>
            <person name="Gojobori T."/>
            <person name="Green R.E."/>
            <person name="Gustincich S."/>
            <person name="Harbers M."/>
            <person name="Hayashi Y."/>
            <person name="Hensch T.K."/>
            <person name="Hirokawa N."/>
            <person name="Hill D."/>
            <person name="Huminiecki L."/>
            <person name="Iacono M."/>
            <person name="Ikeo K."/>
            <person name="Iwama A."/>
            <person name="Ishikawa T."/>
            <person name="Jakt M."/>
            <person name="Kanapin A."/>
            <person name="Katoh M."/>
            <person name="Kawasawa Y."/>
            <person name="Kelso J."/>
            <person name="Kitamura H."/>
            <person name="Kitano H."/>
            <person name="Kollias G."/>
            <person name="Krishnan S.P."/>
            <person name="Kruger A."/>
            <person name="Kummerfeld S.K."/>
            <person name="Kurochkin I.V."/>
            <person name="Lareau L.F."/>
            <person name="Lazarevic D."/>
            <person name="Lipovich L."/>
            <person name="Liu J."/>
            <person name="Liuni S."/>
            <person name="McWilliam S."/>
            <person name="Madan Babu M."/>
            <person name="Madera M."/>
            <person name="Marchionni L."/>
            <person name="Matsuda H."/>
            <person name="Matsuzawa S."/>
            <person name="Miki H."/>
            <person name="Mignone F."/>
            <person name="Miyake S."/>
            <person name="Morris K."/>
            <person name="Mottagui-Tabar S."/>
            <person name="Mulder N."/>
            <person name="Nakano N."/>
            <person name="Nakauchi H."/>
            <person name="Ng P."/>
            <person name="Nilsson R."/>
            <person name="Nishiguchi S."/>
            <person name="Nishikawa S."/>
            <person name="Nori F."/>
            <person name="Ohara O."/>
            <person name="Okazaki Y."/>
            <person name="Orlando V."/>
            <person name="Pang K.C."/>
            <person name="Pavan W.J."/>
            <person name="Pavesi G."/>
            <person name="Pesole G."/>
            <person name="Petrovsky N."/>
            <person name="Piazza S."/>
            <person name="Reed J."/>
            <person name="Reid J.F."/>
            <person name="Ring B.Z."/>
            <person name="Ringwald M."/>
            <person name="Rost B."/>
            <person name="Ruan Y."/>
            <person name="Salzberg S.L."/>
            <person name="Sandelin A."/>
            <person name="Schneider C."/>
            <person name="Schoenbach C."/>
            <person name="Sekiguchi K."/>
            <person name="Semple C.A."/>
            <person name="Seno S."/>
            <person name="Sessa L."/>
            <person name="Sheng Y."/>
            <person name="Shibata Y."/>
            <person name="Shimada H."/>
            <person name="Shimada K."/>
            <person name="Silva D."/>
            <person name="Sinclair B."/>
            <person name="Sperling S."/>
            <person name="Stupka E."/>
            <person name="Sugiura K."/>
            <person name="Sultana R."/>
            <person name="Takenaka Y."/>
            <person name="Taki K."/>
            <person name="Tammoja K."/>
            <person name="Tan S.L."/>
            <person name="Tang S."/>
            <person name="Taylor M.S."/>
            <person name="Tegner J."/>
            <person name="Teichmann S.A."/>
            <person name="Ueda H.R."/>
            <person name="van Nimwegen E."/>
            <person name="Verardo R."/>
            <person name="Wei C.L."/>
            <person name="Yagi K."/>
            <person name="Yamanishi H."/>
            <person name="Zabarovsky E."/>
            <person name="Zhu S."/>
            <person name="Zimmer A."/>
            <person name="Hide W."/>
            <person name="Bult C."/>
            <person name="Grimmond S.M."/>
            <person name="Teasdale R.D."/>
            <person name="Liu E.T."/>
            <person name="Brusic V."/>
            <person name="Quackenbush J."/>
            <person name="Wahlestedt C."/>
            <person name="Mattick J.S."/>
            <person name="Hume D.A."/>
            <person name="Kai C."/>
            <person name="Sasaki D."/>
            <person name="Tomaru Y."/>
            <person name="Fukuda S."/>
            <person name="Kanamori-Katayama M."/>
            <person name="Suzuki M."/>
            <person name="Aoki J."/>
            <person name="Arakawa T."/>
            <person name="Iida J."/>
            <person name="Imamura K."/>
            <person name="Itoh M."/>
            <person name="Kato T."/>
            <person name="Kawaji H."/>
            <person name="Kawagashira N."/>
            <person name="Kawashima T."/>
            <person name="Kojima M."/>
            <person name="Kondo S."/>
            <person name="Konno H."/>
            <person name="Nakano K."/>
            <person name="Ninomiya N."/>
            <person name="Nishio T."/>
            <person name="Okada M."/>
            <person name="Plessy C."/>
            <person name="Shibata K."/>
            <person name="Shiraki T."/>
            <person name="Suzuki S."/>
            <person name="Tagami M."/>
            <person name="Waki K."/>
            <person name="Watahiki A."/>
            <person name="Okamura-Oho Y."/>
            <person name="Suzuki H."/>
            <person name="Kawai J."/>
            <person name="Hayashizaki Y."/>
        </authorList>
    </citation>
    <scope>NUCLEOTIDE SEQUENCE [LARGE SCALE MRNA]</scope>
    <source>
        <strain evidence="10">C57BL/6J</strain>
        <tissue evidence="10">Lung</tissue>
    </source>
</reference>
<reference evidence="12" key="5">
    <citation type="journal article" date="2009" name="PLoS Biol.">
        <title>Lineage-specific biology revealed by a finished genome assembly of the mouse.</title>
        <authorList>
            <person name="Church D.M."/>
            <person name="Goodstadt L."/>
            <person name="Hillier L.W."/>
            <person name="Zody M.C."/>
            <person name="Goldstein S."/>
            <person name="She X."/>
            <person name="Bult C.J."/>
            <person name="Agarwala R."/>
            <person name="Cherry J.L."/>
            <person name="DiCuccio M."/>
            <person name="Hlavina W."/>
            <person name="Kapustin Y."/>
            <person name="Meric P."/>
            <person name="Maglott D."/>
            <person name="Birtle Z."/>
            <person name="Marques A.C."/>
            <person name="Graves T."/>
            <person name="Zhou S."/>
            <person name="Teague B."/>
            <person name="Potamousis K."/>
            <person name="Churas C."/>
            <person name="Place M."/>
            <person name="Herschleb J."/>
            <person name="Runnheim R."/>
            <person name="Forrest D."/>
            <person name="Amos-Landgraf J."/>
            <person name="Schwartz D.C."/>
            <person name="Cheng Z."/>
            <person name="Lindblad-Toh K."/>
            <person name="Eichler E.E."/>
            <person name="Ponting C.P."/>
        </authorList>
    </citation>
    <scope>NUCLEOTIDE SEQUENCE [LARGE SCALE GENOMIC DNA]</scope>
    <source>
        <strain evidence="12">C57BL/6J</strain>
    </source>
</reference>
<reference evidence="6" key="6">
    <citation type="journal article" date="2015" name="Hum. Mol. Genet.">
        <title>Regulation of SPRY3 by X chromosome and PAR2-linked promoters in an autism susceptibility region.</title>
        <authorList>
            <person name="Ning Z."/>
            <person name="McLellan A.S."/>
            <person name="Ball M."/>
            <person name="Wynne F."/>
            <person name="O'Neill C."/>
            <person name="Mills W."/>
            <person name="Quinn J.P."/>
            <person name="Kleinjan D.A."/>
            <person name="Anney R.J."/>
            <person name="Carmody R.J."/>
            <person name="O'Keeffe G."/>
            <person name="Moore T."/>
        </authorList>
    </citation>
    <scope>SUBCELLULAR LOCATION</scope>
    <scope>TISSUE SPECIFICITY</scope>
</reference>
<accession>Q8CF60</accession>
<accession>E9PXW0</accession>
<accession>Q7TMI6</accession>
<accession>Q8K439</accession>
<dbReference type="EMBL" id="BC056222">
    <property type="protein sequence ID" value="AAH56222.1"/>
    <property type="molecule type" value="mRNA"/>
</dbReference>
<dbReference type="EMBL" id="AK004765">
    <property type="protein sequence ID" value="BAC25096.1"/>
    <property type="molecule type" value="mRNA"/>
</dbReference>
<dbReference type="EMBL" id="AK159455">
    <property type="protein sequence ID" value="BAE35098.1"/>
    <property type="molecule type" value="mRNA"/>
</dbReference>
<dbReference type="EMBL" id="AC139347">
    <property type="status" value="NOT_ANNOTATED_CDS"/>
    <property type="molecule type" value="Genomic_DNA"/>
</dbReference>
<dbReference type="CCDS" id="CCDS27909.1"/>
<dbReference type="RefSeq" id="NP_683726.2">
    <property type="nucleotide sequence ID" value="NM_148924.3"/>
</dbReference>
<dbReference type="SMR" id="Q8CF60"/>
<dbReference type="FunCoup" id="Q8CF60">
    <property type="interactions" value="2621"/>
</dbReference>
<dbReference type="IntAct" id="Q8CF60">
    <property type="interactions" value="4"/>
</dbReference>
<dbReference type="STRING" id="10090.ENSMUSP00000023176"/>
<dbReference type="iPTMnet" id="Q8CF60"/>
<dbReference type="PhosphoSitePlus" id="Q8CF60"/>
<dbReference type="jPOST" id="Q8CF60"/>
<dbReference type="PaxDb" id="10090-ENSMUSP00000023176"/>
<dbReference type="ProteomicsDB" id="348829"/>
<dbReference type="Antibodypedia" id="24089">
    <property type="antibodies" value="244 antibodies from 24 providers"/>
</dbReference>
<dbReference type="DNASU" id="74120"/>
<dbReference type="Ensembl" id="ENSMUST00000023176.5">
    <property type="protein sequence ID" value="ENSMUSP00000023176.5"/>
    <property type="gene ID" value="ENSMUSG00000022529.12"/>
</dbReference>
<dbReference type="GeneID" id="74120"/>
<dbReference type="KEGG" id="mmu:74120"/>
<dbReference type="UCSC" id="uc007xyn.2">
    <property type="organism name" value="mouse"/>
</dbReference>
<dbReference type="UCSC" id="uc007xyq.2">
    <property type="organism name" value="mouse"/>
</dbReference>
<dbReference type="AGR" id="MGI:1921370"/>
<dbReference type="CTD" id="74120"/>
<dbReference type="MGI" id="MGI:1921370">
    <property type="gene designation" value="Zfp263"/>
</dbReference>
<dbReference type="VEuPathDB" id="HostDB:ENSMUSG00000022529"/>
<dbReference type="eggNOG" id="KOG1721">
    <property type="taxonomic scope" value="Eukaryota"/>
</dbReference>
<dbReference type="GeneTree" id="ENSGT00940000159965"/>
<dbReference type="HOGENOM" id="CLU_002678_2_1_1"/>
<dbReference type="InParanoid" id="Q8CF60"/>
<dbReference type="OMA" id="QQVTNQG"/>
<dbReference type="OrthoDB" id="6077919at2759"/>
<dbReference type="PhylomeDB" id="Q8CF60"/>
<dbReference type="TreeFam" id="TF350829"/>
<dbReference type="Reactome" id="R-MMU-212436">
    <property type="pathway name" value="Generic Transcription Pathway"/>
</dbReference>
<dbReference type="BioGRID-ORCS" id="74120">
    <property type="hits" value="1 hit in 78 CRISPR screens"/>
</dbReference>
<dbReference type="ChiTaRS" id="Zfp263">
    <property type="organism name" value="mouse"/>
</dbReference>
<dbReference type="PRO" id="PR:Q8CF60"/>
<dbReference type="Proteomes" id="UP000000589">
    <property type="component" value="Chromosome 16"/>
</dbReference>
<dbReference type="RNAct" id="Q8CF60">
    <property type="molecule type" value="protein"/>
</dbReference>
<dbReference type="Bgee" id="ENSMUSG00000022529">
    <property type="expression patterns" value="Expressed in rostral migratory stream and 230 other cell types or tissues"/>
</dbReference>
<dbReference type="ExpressionAtlas" id="Q8CF60">
    <property type="expression patterns" value="baseline and differential"/>
</dbReference>
<dbReference type="GO" id="GO:0005634">
    <property type="term" value="C:nucleus"/>
    <property type="evidence" value="ECO:0000314"/>
    <property type="project" value="UniProtKB"/>
</dbReference>
<dbReference type="GO" id="GO:0001227">
    <property type="term" value="F:DNA-binding transcription repressor activity, RNA polymerase II-specific"/>
    <property type="evidence" value="ECO:0007669"/>
    <property type="project" value="Ensembl"/>
</dbReference>
<dbReference type="GO" id="GO:0000976">
    <property type="term" value="F:transcription cis-regulatory region binding"/>
    <property type="evidence" value="ECO:0000250"/>
    <property type="project" value="UniProtKB"/>
</dbReference>
<dbReference type="GO" id="GO:0008270">
    <property type="term" value="F:zinc ion binding"/>
    <property type="evidence" value="ECO:0007669"/>
    <property type="project" value="UniProtKB-KW"/>
</dbReference>
<dbReference type="GO" id="GO:0000122">
    <property type="term" value="P:negative regulation of transcription by RNA polymerase II"/>
    <property type="evidence" value="ECO:0000250"/>
    <property type="project" value="UniProtKB"/>
</dbReference>
<dbReference type="GO" id="GO:0045944">
    <property type="term" value="P:positive regulation of transcription by RNA polymerase II"/>
    <property type="evidence" value="ECO:0000250"/>
    <property type="project" value="UniProtKB"/>
</dbReference>
<dbReference type="CDD" id="cd07765">
    <property type="entry name" value="KRAB_A-box"/>
    <property type="match status" value="1"/>
</dbReference>
<dbReference type="CDD" id="cd07936">
    <property type="entry name" value="SCAN"/>
    <property type="match status" value="1"/>
</dbReference>
<dbReference type="FunFam" id="3.30.160.60:FF:001749">
    <property type="entry name" value="Zinc finger protein 263"/>
    <property type="match status" value="1"/>
</dbReference>
<dbReference type="FunFam" id="3.30.160.60:FF:003262">
    <property type="entry name" value="Zinc finger protein 263"/>
    <property type="match status" value="1"/>
</dbReference>
<dbReference type="FunFam" id="1.10.4020.10:FF:000001">
    <property type="entry name" value="zinc finger protein 263 isoform X1"/>
    <property type="match status" value="1"/>
</dbReference>
<dbReference type="FunFam" id="3.30.160.60:FF:000540">
    <property type="entry name" value="zinc finger protein 263 isoform X1"/>
    <property type="match status" value="1"/>
</dbReference>
<dbReference type="FunFam" id="3.30.160.60:FF:002887">
    <property type="entry name" value="Zinc finger protein 263 isoform X2"/>
    <property type="match status" value="1"/>
</dbReference>
<dbReference type="FunFam" id="3.30.160.60:FF:002343">
    <property type="entry name" value="Zinc finger protein 33A"/>
    <property type="match status" value="3"/>
</dbReference>
<dbReference type="FunFam" id="3.30.160.60:FF:001498">
    <property type="entry name" value="Zinc finger protein 404"/>
    <property type="match status" value="1"/>
</dbReference>
<dbReference type="FunFam" id="3.30.160.60:FF:000933">
    <property type="entry name" value="zinc finger protein 771"/>
    <property type="match status" value="1"/>
</dbReference>
<dbReference type="Gene3D" id="3.30.160.60">
    <property type="entry name" value="Classic Zinc Finger"/>
    <property type="match status" value="9"/>
</dbReference>
<dbReference type="Gene3D" id="1.10.4020.10">
    <property type="entry name" value="DNA breaking-rejoining enzymes"/>
    <property type="match status" value="1"/>
</dbReference>
<dbReference type="InterPro" id="IPR001909">
    <property type="entry name" value="KRAB"/>
</dbReference>
<dbReference type="InterPro" id="IPR036051">
    <property type="entry name" value="KRAB_dom_sf"/>
</dbReference>
<dbReference type="InterPro" id="IPR003309">
    <property type="entry name" value="SCAN_dom"/>
</dbReference>
<dbReference type="InterPro" id="IPR038269">
    <property type="entry name" value="SCAN_sf"/>
</dbReference>
<dbReference type="InterPro" id="IPR036236">
    <property type="entry name" value="Znf_C2H2_sf"/>
</dbReference>
<dbReference type="InterPro" id="IPR013087">
    <property type="entry name" value="Znf_C2H2_type"/>
</dbReference>
<dbReference type="PANTHER" id="PTHR24393:SF158">
    <property type="entry name" value="C2H2-TYPE DOMAIN-CONTAINING PROTEIN"/>
    <property type="match status" value="1"/>
</dbReference>
<dbReference type="PANTHER" id="PTHR24393">
    <property type="entry name" value="ZINC FINGER PROTEIN"/>
    <property type="match status" value="1"/>
</dbReference>
<dbReference type="Pfam" id="PF01352">
    <property type="entry name" value="KRAB"/>
    <property type="match status" value="1"/>
</dbReference>
<dbReference type="Pfam" id="PF02023">
    <property type="entry name" value="SCAN"/>
    <property type="match status" value="1"/>
</dbReference>
<dbReference type="Pfam" id="PF00096">
    <property type="entry name" value="zf-C2H2"/>
    <property type="match status" value="7"/>
</dbReference>
<dbReference type="Pfam" id="PF13465">
    <property type="entry name" value="zf-H2C2_2"/>
    <property type="match status" value="1"/>
</dbReference>
<dbReference type="SMART" id="SM00349">
    <property type="entry name" value="KRAB"/>
    <property type="match status" value="1"/>
</dbReference>
<dbReference type="SMART" id="SM00431">
    <property type="entry name" value="SCAN"/>
    <property type="match status" value="1"/>
</dbReference>
<dbReference type="SMART" id="SM00355">
    <property type="entry name" value="ZnF_C2H2"/>
    <property type="match status" value="9"/>
</dbReference>
<dbReference type="SUPFAM" id="SSF57667">
    <property type="entry name" value="beta-beta-alpha zinc fingers"/>
    <property type="match status" value="6"/>
</dbReference>
<dbReference type="SUPFAM" id="SSF109640">
    <property type="entry name" value="KRAB domain (Kruppel-associated box)"/>
    <property type="match status" value="1"/>
</dbReference>
<dbReference type="SUPFAM" id="SSF47353">
    <property type="entry name" value="Retrovirus capsid dimerization domain-like"/>
    <property type="match status" value="1"/>
</dbReference>
<dbReference type="PROSITE" id="PS50804">
    <property type="entry name" value="SCAN_BOX"/>
    <property type="match status" value="1"/>
</dbReference>
<dbReference type="PROSITE" id="PS00028">
    <property type="entry name" value="ZINC_FINGER_C2H2_1"/>
    <property type="match status" value="9"/>
</dbReference>
<dbReference type="PROSITE" id="PS50157">
    <property type="entry name" value="ZINC_FINGER_C2H2_2"/>
    <property type="match status" value="9"/>
</dbReference>
<protein>
    <recommendedName>
        <fullName evidence="11">Zinc finger protein 263</fullName>
    </recommendedName>
    <alternativeName>
        <fullName evidence="1">Zinc finger protein FPM315</fullName>
    </alternativeName>
    <alternativeName>
        <fullName evidence="1">Zinc finger protein with KRAB and SCAN domains 12</fullName>
    </alternativeName>
</protein>